<protein>
    <recommendedName>
        <fullName>Phytochrome C</fullName>
    </recommendedName>
</protein>
<dbReference type="EMBL" id="AF141942">
    <property type="protein sequence ID" value="AAF66603.1"/>
    <property type="molecule type" value="Genomic_DNA"/>
</dbReference>
<dbReference type="EMBL" id="CM000128">
    <property type="protein sequence ID" value="EAY91883.1"/>
    <property type="status" value="ALT_SEQ"/>
    <property type="molecule type" value="Genomic_DNA"/>
</dbReference>
<dbReference type="SMR" id="A2XM23"/>
<dbReference type="STRING" id="39946.A2XM23"/>
<dbReference type="Proteomes" id="UP000007015">
    <property type="component" value="Chromosome 3"/>
</dbReference>
<dbReference type="GO" id="GO:0000155">
    <property type="term" value="F:phosphorelay sensor kinase activity"/>
    <property type="evidence" value="ECO:0007669"/>
    <property type="project" value="InterPro"/>
</dbReference>
<dbReference type="GO" id="GO:0009881">
    <property type="term" value="F:photoreceptor activity"/>
    <property type="evidence" value="ECO:0007669"/>
    <property type="project" value="UniProtKB-KW"/>
</dbReference>
<dbReference type="GO" id="GO:0042803">
    <property type="term" value="F:protein homodimerization activity"/>
    <property type="evidence" value="ECO:0007669"/>
    <property type="project" value="InterPro"/>
</dbReference>
<dbReference type="GO" id="GO:0009584">
    <property type="term" value="P:detection of visible light"/>
    <property type="evidence" value="ECO:0007669"/>
    <property type="project" value="InterPro"/>
</dbReference>
<dbReference type="GO" id="GO:0009585">
    <property type="term" value="P:red, far-red light phototransduction"/>
    <property type="evidence" value="ECO:0007669"/>
    <property type="project" value="InterPro"/>
</dbReference>
<dbReference type="GO" id="GO:0006355">
    <property type="term" value="P:regulation of DNA-templated transcription"/>
    <property type="evidence" value="ECO:0007669"/>
    <property type="project" value="InterPro"/>
</dbReference>
<dbReference type="CDD" id="cd16932">
    <property type="entry name" value="HATPase_Phy-like"/>
    <property type="match status" value="1"/>
</dbReference>
<dbReference type="CDD" id="cd00082">
    <property type="entry name" value="HisKA"/>
    <property type="match status" value="1"/>
</dbReference>
<dbReference type="CDD" id="cd00130">
    <property type="entry name" value="PAS"/>
    <property type="match status" value="2"/>
</dbReference>
<dbReference type="FunFam" id="3.30.450.20:FF:000034">
    <property type="entry name" value="Phytochrome"/>
    <property type="match status" value="1"/>
</dbReference>
<dbReference type="FunFam" id="3.30.450.20:FF:000039">
    <property type="entry name" value="Phytochrome"/>
    <property type="match status" value="1"/>
</dbReference>
<dbReference type="FunFam" id="3.30.450.270:FF:000001">
    <property type="entry name" value="Phytochrome"/>
    <property type="match status" value="1"/>
</dbReference>
<dbReference type="FunFam" id="3.30.565.10:FF:000064">
    <property type="entry name" value="Phytochrome"/>
    <property type="match status" value="1"/>
</dbReference>
<dbReference type="Gene3D" id="3.30.450.270">
    <property type="match status" value="1"/>
</dbReference>
<dbReference type="Gene3D" id="3.30.450.40">
    <property type="match status" value="1"/>
</dbReference>
<dbReference type="Gene3D" id="3.30.565.10">
    <property type="entry name" value="Histidine kinase-like ATPase, C-terminal domain"/>
    <property type="match status" value="1"/>
</dbReference>
<dbReference type="Gene3D" id="3.30.450.20">
    <property type="entry name" value="PAS domain"/>
    <property type="match status" value="3"/>
</dbReference>
<dbReference type="InterPro" id="IPR003018">
    <property type="entry name" value="GAF"/>
</dbReference>
<dbReference type="InterPro" id="IPR029016">
    <property type="entry name" value="GAF-like_dom_sf"/>
</dbReference>
<dbReference type="InterPro" id="IPR036890">
    <property type="entry name" value="HATPase_C_sf"/>
</dbReference>
<dbReference type="InterPro" id="IPR005467">
    <property type="entry name" value="His_kinase_dom"/>
</dbReference>
<dbReference type="InterPro" id="IPR003661">
    <property type="entry name" value="HisK_dim/P_dom"/>
</dbReference>
<dbReference type="InterPro" id="IPR000014">
    <property type="entry name" value="PAS"/>
</dbReference>
<dbReference type="InterPro" id="IPR035965">
    <property type="entry name" value="PAS-like_dom_sf"/>
</dbReference>
<dbReference type="InterPro" id="IPR013654">
    <property type="entry name" value="PAS_2"/>
</dbReference>
<dbReference type="InterPro" id="IPR013767">
    <property type="entry name" value="PAS_fold"/>
</dbReference>
<dbReference type="InterPro" id="IPR044767">
    <property type="entry name" value="Phy_HATPase-like"/>
</dbReference>
<dbReference type="InterPro" id="IPR016132">
    <property type="entry name" value="Phyto_chromo_attachment"/>
</dbReference>
<dbReference type="InterPro" id="IPR013516">
    <property type="entry name" value="Phyto_chromo_BS"/>
</dbReference>
<dbReference type="InterPro" id="IPR001294">
    <property type="entry name" value="Phytochrome"/>
</dbReference>
<dbReference type="InterPro" id="IPR012129">
    <property type="entry name" value="Phytochrome_A-E"/>
</dbReference>
<dbReference type="InterPro" id="IPR013515">
    <property type="entry name" value="Phytochrome_cen-reg"/>
</dbReference>
<dbReference type="InterPro" id="IPR043150">
    <property type="entry name" value="Phytochrome_PHY_sf"/>
</dbReference>
<dbReference type="NCBIfam" id="TIGR00229">
    <property type="entry name" value="sensory_box"/>
    <property type="match status" value="1"/>
</dbReference>
<dbReference type="PANTHER" id="PTHR47876">
    <property type="entry name" value="OS08G0260000 PROTEIN"/>
    <property type="match status" value="1"/>
</dbReference>
<dbReference type="PANTHER" id="PTHR47876:SF3">
    <property type="entry name" value="PHYTOCHROME 1"/>
    <property type="match status" value="1"/>
</dbReference>
<dbReference type="Pfam" id="PF01590">
    <property type="entry name" value="GAF"/>
    <property type="match status" value="1"/>
</dbReference>
<dbReference type="Pfam" id="PF02518">
    <property type="entry name" value="HATPase_c"/>
    <property type="match status" value="1"/>
</dbReference>
<dbReference type="Pfam" id="PF00512">
    <property type="entry name" value="HisKA"/>
    <property type="match status" value="1"/>
</dbReference>
<dbReference type="Pfam" id="PF00989">
    <property type="entry name" value="PAS"/>
    <property type="match status" value="2"/>
</dbReference>
<dbReference type="Pfam" id="PF08446">
    <property type="entry name" value="PAS_2"/>
    <property type="match status" value="1"/>
</dbReference>
<dbReference type="Pfam" id="PF00360">
    <property type="entry name" value="PHY"/>
    <property type="match status" value="1"/>
</dbReference>
<dbReference type="PIRSF" id="PIRSF000084">
    <property type="entry name" value="Phytochrome"/>
    <property type="match status" value="1"/>
</dbReference>
<dbReference type="PRINTS" id="PR01033">
    <property type="entry name" value="PHYTOCHROME"/>
</dbReference>
<dbReference type="SMART" id="SM00065">
    <property type="entry name" value="GAF"/>
    <property type="match status" value="1"/>
</dbReference>
<dbReference type="SMART" id="SM00387">
    <property type="entry name" value="HATPase_c"/>
    <property type="match status" value="1"/>
</dbReference>
<dbReference type="SMART" id="SM00388">
    <property type="entry name" value="HisKA"/>
    <property type="match status" value="1"/>
</dbReference>
<dbReference type="SMART" id="SM00091">
    <property type="entry name" value="PAS"/>
    <property type="match status" value="2"/>
</dbReference>
<dbReference type="SUPFAM" id="SSF55874">
    <property type="entry name" value="ATPase domain of HSP90 chaperone/DNA topoisomerase II/histidine kinase"/>
    <property type="match status" value="1"/>
</dbReference>
<dbReference type="SUPFAM" id="SSF55781">
    <property type="entry name" value="GAF domain-like"/>
    <property type="match status" value="2"/>
</dbReference>
<dbReference type="SUPFAM" id="SSF55785">
    <property type="entry name" value="PYP-like sensor domain (PAS domain)"/>
    <property type="match status" value="3"/>
</dbReference>
<dbReference type="PROSITE" id="PS50109">
    <property type="entry name" value="HIS_KIN"/>
    <property type="match status" value="1"/>
</dbReference>
<dbReference type="PROSITE" id="PS50112">
    <property type="entry name" value="PAS"/>
    <property type="match status" value="2"/>
</dbReference>
<dbReference type="PROSITE" id="PS00245">
    <property type="entry name" value="PHYTOCHROME_1"/>
    <property type="match status" value="1"/>
</dbReference>
<dbReference type="PROSITE" id="PS50046">
    <property type="entry name" value="PHYTOCHROME_2"/>
    <property type="match status" value="1"/>
</dbReference>
<accession>A2XM23</accession>
<accession>P93429</accession>
<accession>Q7FUM6</accession>
<accession>Q9M7A9</accession>
<accession>Q9ZWI9</accession>
<feature type="chain" id="PRO_0000300861" description="Phytochrome C">
    <location>
        <begin position="1"/>
        <end position="1137"/>
    </location>
</feature>
<feature type="domain" description="GAF">
    <location>
        <begin position="217"/>
        <end position="400"/>
    </location>
</feature>
<feature type="domain" description="PAS 1" evidence="3">
    <location>
        <begin position="620"/>
        <end position="690"/>
    </location>
</feature>
<feature type="domain" description="PAS 2" evidence="3">
    <location>
        <begin position="750"/>
        <end position="824"/>
    </location>
</feature>
<feature type="domain" description="Histidine kinase" evidence="2">
    <location>
        <begin position="904"/>
        <end position="1124"/>
    </location>
</feature>
<feature type="region of interest" description="Disordered" evidence="4">
    <location>
        <begin position="1"/>
        <end position="27"/>
    </location>
</feature>
<feature type="compositionally biased region" description="Low complexity" evidence="4">
    <location>
        <begin position="1"/>
        <end position="18"/>
    </location>
</feature>
<feature type="binding site" description="covalent" evidence="1">
    <location>
        <position position="322"/>
    </location>
    <ligand>
        <name>phytochromobilin</name>
        <dbReference type="ChEBI" id="CHEBI:189064"/>
    </ligand>
</feature>
<feature type="sequence conflict" description="In Ref. 1; AAF66603." evidence="5" ref="1">
    <original>Y</original>
    <variation>C</variation>
    <location>
        <position position="504"/>
    </location>
</feature>
<feature type="sequence conflict" description="In Ref. 1; AAF66603." evidence="5" ref="1">
    <original>M</original>
    <variation>T</variation>
    <location>
        <position position="1025"/>
    </location>
</feature>
<feature type="sequence conflict" description="In Ref. 1; AAF66603." evidence="5" ref="1">
    <original>S</original>
    <variation>A</variation>
    <location>
        <position position="1109"/>
    </location>
</feature>
<name>PHYC_ORYSI</name>
<reference key="1">
    <citation type="journal article" date="2000" name="Plant Mol. Biol.">
        <title>Rice PHYC gene: structure, expression, map position and evolution.</title>
        <authorList>
            <person name="Basu D."/>
            <person name="Dehesh K."/>
            <person name="Schneider-Poetsch H.-J."/>
            <person name="Harrington S.E."/>
            <person name="McCouch S.R."/>
            <person name="Quail P.H."/>
        </authorList>
    </citation>
    <scope>NUCLEOTIDE SEQUENCE [GENOMIC DNA]</scope>
    <source>
        <strain>cv. IR36</strain>
    </source>
</reference>
<reference key="2">
    <citation type="journal article" date="2005" name="PLoS Biol.">
        <title>The genomes of Oryza sativa: a history of duplications.</title>
        <authorList>
            <person name="Yu J."/>
            <person name="Wang J."/>
            <person name="Lin W."/>
            <person name="Li S."/>
            <person name="Li H."/>
            <person name="Zhou J."/>
            <person name="Ni P."/>
            <person name="Dong W."/>
            <person name="Hu S."/>
            <person name="Zeng C."/>
            <person name="Zhang J."/>
            <person name="Zhang Y."/>
            <person name="Li R."/>
            <person name="Xu Z."/>
            <person name="Li S."/>
            <person name="Li X."/>
            <person name="Zheng H."/>
            <person name="Cong L."/>
            <person name="Lin L."/>
            <person name="Yin J."/>
            <person name="Geng J."/>
            <person name="Li G."/>
            <person name="Shi J."/>
            <person name="Liu J."/>
            <person name="Lv H."/>
            <person name="Li J."/>
            <person name="Wang J."/>
            <person name="Deng Y."/>
            <person name="Ran L."/>
            <person name="Shi X."/>
            <person name="Wang X."/>
            <person name="Wu Q."/>
            <person name="Li C."/>
            <person name="Ren X."/>
            <person name="Wang J."/>
            <person name="Wang X."/>
            <person name="Li D."/>
            <person name="Liu D."/>
            <person name="Zhang X."/>
            <person name="Ji Z."/>
            <person name="Zhao W."/>
            <person name="Sun Y."/>
            <person name="Zhang Z."/>
            <person name="Bao J."/>
            <person name="Han Y."/>
            <person name="Dong L."/>
            <person name="Ji J."/>
            <person name="Chen P."/>
            <person name="Wu S."/>
            <person name="Liu J."/>
            <person name="Xiao Y."/>
            <person name="Bu D."/>
            <person name="Tan J."/>
            <person name="Yang L."/>
            <person name="Ye C."/>
            <person name="Zhang J."/>
            <person name="Xu J."/>
            <person name="Zhou Y."/>
            <person name="Yu Y."/>
            <person name="Zhang B."/>
            <person name="Zhuang S."/>
            <person name="Wei H."/>
            <person name="Liu B."/>
            <person name="Lei M."/>
            <person name="Yu H."/>
            <person name="Li Y."/>
            <person name="Xu H."/>
            <person name="Wei S."/>
            <person name="He X."/>
            <person name="Fang L."/>
            <person name="Zhang Z."/>
            <person name="Zhang Y."/>
            <person name="Huang X."/>
            <person name="Su Z."/>
            <person name="Tong W."/>
            <person name="Li J."/>
            <person name="Tong Z."/>
            <person name="Li S."/>
            <person name="Ye J."/>
            <person name="Wang L."/>
            <person name="Fang L."/>
            <person name="Lei T."/>
            <person name="Chen C.-S."/>
            <person name="Chen H.-C."/>
            <person name="Xu Z."/>
            <person name="Li H."/>
            <person name="Huang H."/>
            <person name="Zhang F."/>
            <person name="Xu H."/>
            <person name="Li N."/>
            <person name="Zhao C."/>
            <person name="Li S."/>
            <person name="Dong L."/>
            <person name="Huang Y."/>
            <person name="Li L."/>
            <person name="Xi Y."/>
            <person name="Qi Q."/>
            <person name="Li W."/>
            <person name="Zhang B."/>
            <person name="Hu W."/>
            <person name="Zhang Y."/>
            <person name="Tian X."/>
            <person name="Jiao Y."/>
            <person name="Liang X."/>
            <person name="Jin J."/>
            <person name="Gao L."/>
            <person name="Zheng W."/>
            <person name="Hao B."/>
            <person name="Liu S.-M."/>
            <person name="Wang W."/>
            <person name="Yuan L."/>
            <person name="Cao M."/>
            <person name="McDermott J."/>
            <person name="Samudrala R."/>
            <person name="Wang J."/>
            <person name="Wong G.K.-S."/>
            <person name="Yang H."/>
        </authorList>
    </citation>
    <scope>NUCLEOTIDE SEQUENCE [LARGE SCALE GENOMIC DNA]</scope>
    <source>
        <strain>cv. 93-11</strain>
    </source>
</reference>
<evidence type="ECO:0000250" key="1"/>
<evidence type="ECO:0000255" key="2">
    <source>
        <dbReference type="PROSITE-ProRule" id="PRU00107"/>
    </source>
</evidence>
<evidence type="ECO:0000255" key="3">
    <source>
        <dbReference type="PROSITE-ProRule" id="PRU00140"/>
    </source>
</evidence>
<evidence type="ECO:0000256" key="4">
    <source>
        <dbReference type="SAM" id="MobiDB-lite"/>
    </source>
</evidence>
<evidence type="ECO:0000305" key="5"/>
<organism>
    <name type="scientific">Oryza sativa subsp. indica</name>
    <name type="common">Rice</name>
    <dbReference type="NCBI Taxonomy" id="39946"/>
    <lineage>
        <taxon>Eukaryota</taxon>
        <taxon>Viridiplantae</taxon>
        <taxon>Streptophyta</taxon>
        <taxon>Embryophyta</taxon>
        <taxon>Tracheophyta</taxon>
        <taxon>Spermatophyta</taxon>
        <taxon>Magnoliopsida</taxon>
        <taxon>Liliopsida</taxon>
        <taxon>Poales</taxon>
        <taxon>Poaceae</taxon>
        <taxon>BOP clade</taxon>
        <taxon>Oryzoideae</taxon>
        <taxon>Oryzeae</taxon>
        <taxon>Oryzinae</taxon>
        <taxon>Oryza</taxon>
        <taxon>Oryza sativa</taxon>
    </lineage>
</organism>
<sequence length="1137" mass="126043">MSSSRSNNRATCSRSSSARSKHSARVVAQTPMDAQLHAEFEGSQRHFDYSSSVGAANRSGATTSNVSAYLQNMQRGRFVQPFGCLLAVHPETFALLAYSENAAEMLDLTPHAVPTIDQREALAVGTDVRTLFRSHSFVALQKAATFGDVNLLNPILVHARTSGKPFYAIMHRIDVGLVIDLEPVNPVDLPVTATGAIKSYKLAARAIARLQSLPSGNLSLLCDVLVREVSELTGYDRVMAYKFHEDEHGEVIAECKRSDLEPYLGLHYPATDIPQASRFLFMKNKVRMICDCSATPVKIIQDDSLTQPISICGSTLRAPHGCHAQYMASMGSVASLVMSVTINEDEDDDGDTGSDQQPKGRKLWGLMVCHHTSPRFVPFPLRYACEFLLQVFGIQINKEVELAAQAKERHILRTQTLLCDMLLRDAPVGIFTQSPNVMDLVKCDGAALYYQNQLWVLGSTPSEAEIKNIVAWLQEYHDGSTGLSTDSLVEAGYPGAAALGDVVYGMAAIKISSKDFIFWFRSHTAKEIKWGGAKHEPIDADDNGRKMHPRSSFKAFLEVVKWRSVPWEDVEMDAIHSLQLILRGSLQDEDANKNNNAKSIVTAPSDDMKKIQGLLELRTVTNEMVRLIETATAPILAVDITGSINGWNNKAAELTGLPVMEAIGKPLVDLVIDDSVEVVKQILNSALQGIEEQNLQIKLKTFNHQENNGPVILMVNACCSRDLSEKVVGVCFVAQDMTGQNIIMDKYTRIQGDYVAIVKNPSELIPPIFMINDLGSCLEWNEAMQKITGIKREDAVDKLLIGEVFTHHEYGCRVKDHGTLTKLSILMNTVISGQDPEKLLFGFFNTDGKYIESLMTATKRTDAEGKITGALCFLHVASPELQHALQVQKMSEQAAMNSFKELTYIRQELRNPLNGMQFTRNLLEPSDLTEEQRKLLASNVLCQEQLKKILHDTDLESIEQCYTEMSTVDFNLEEALNTVLMQAMPQSKEKQISIDRDWPAEVSCMHLCGDNLRLQQVLADFLACMLQFTQPAEGPIVLQVIPRMENIGSGMQIAHLEFRLVHPAPGVPEALIQEMFRHSPGASREGLGLYISQKLVKTMSGTVQYLRESESSSFIVLVEFPVAQLSTKRCKASTSKF</sequence>
<proteinExistence type="inferred from homology"/>
<keyword id="KW-0157">Chromophore</keyword>
<keyword id="KW-0600">Photoreceptor protein</keyword>
<keyword id="KW-0675">Receptor</keyword>
<keyword id="KW-1185">Reference proteome</keyword>
<keyword id="KW-0677">Repeat</keyword>
<keyword id="KW-0716">Sensory transduction</keyword>
<keyword id="KW-0804">Transcription</keyword>
<keyword id="KW-0805">Transcription regulation</keyword>
<gene>
    <name type="primary">PHYC</name>
    <name type="ORF">OsI_013116</name>
</gene>
<comment type="function">
    <text>Regulatory photoreceptor which exists in two forms that are reversibly interconvertible by light: the Pr form that absorbs maximally in the red region of the spectrum and the Pfr form that absorbs maximally in the far-red region. Photoconversion of Pr to Pfr induces an array of morphogenic responses, whereas reconversion of Pfr to Pr cancels the induction of those responses. Pfr controls the expression of a number of nuclear genes including those encoding the small subunit of ribulose-bisphosphate carboxylase, chlorophyll A/B binding protein, protochlorophyllide reductase, rRNA, etc. It also controls the expression of its own gene(s) in a negative feedback fashion.</text>
</comment>
<comment type="subunit">
    <text evidence="1">Homodimer.</text>
</comment>
<comment type="PTM">
    <text evidence="1">Contains one covalently linked phytochromobilin chromophore.</text>
</comment>
<comment type="similarity">
    <text evidence="5">Belongs to the phytochrome family.</text>
</comment>
<comment type="sequence caution" evidence="5">
    <conflict type="erroneous gene model prediction">
        <sequence resource="EMBL-CDS" id="EAY91883"/>
    </conflict>
</comment>